<gene>
    <name evidence="1" type="primary">rodZ</name>
    <name type="ordered locus">ECSE_2802</name>
</gene>
<proteinExistence type="inferred from homology"/>
<feature type="chain" id="PRO_1000189543" description="Cytoskeleton protein RodZ">
    <location>
        <begin position="1"/>
        <end position="337"/>
    </location>
</feature>
<feature type="topological domain" description="Cytoplasmic" evidence="1">
    <location>
        <begin position="1"/>
        <end position="111"/>
    </location>
</feature>
<feature type="transmembrane region" description="Helical; Signal-anchor for type II membrane protein" evidence="1">
    <location>
        <begin position="112"/>
        <end position="132"/>
    </location>
</feature>
<feature type="topological domain" description="Periplasmic" evidence="1">
    <location>
        <begin position="133"/>
        <end position="337"/>
    </location>
</feature>
<feature type="domain" description="HTH cro/C1-type" evidence="1">
    <location>
        <begin position="19"/>
        <end position="71"/>
    </location>
</feature>
<feature type="DNA-binding region" description="H-T-H motif" evidence="1">
    <location>
        <begin position="30"/>
        <end position="49"/>
    </location>
</feature>
<feature type="region of interest" description="Disordered" evidence="2">
    <location>
        <begin position="145"/>
        <end position="236"/>
    </location>
</feature>
<feature type="compositionally biased region" description="Polar residues" evidence="2">
    <location>
        <begin position="145"/>
        <end position="167"/>
    </location>
</feature>
<feature type="compositionally biased region" description="Low complexity" evidence="2">
    <location>
        <begin position="168"/>
        <end position="207"/>
    </location>
</feature>
<feature type="compositionally biased region" description="Polar residues" evidence="2">
    <location>
        <begin position="208"/>
        <end position="218"/>
    </location>
</feature>
<feature type="compositionally biased region" description="Low complexity" evidence="2">
    <location>
        <begin position="219"/>
        <end position="236"/>
    </location>
</feature>
<organism>
    <name type="scientific">Escherichia coli (strain SE11)</name>
    <dbReference type="NCBI Taxonomy" id="409438"/>
    <lineage>
        <taxon>Bacteria</taxon>
        <taxon>Pseudomonadati</taxon>
        <taxon>Pseudomonadota</taxon>
        <taxon>Gammaproteobacteria</taxon>
        <taxon>Enterobacterales</taxon>
        <taxon>Enterobacteriaceae</taxon>
        <taxon>Escherichia</taxon>
    </lineage>
</organism>
<comment type="function">
    <text evidence="1">Cytoskeletal protein that is involved in cell-shape control through regulation of the length of the long axis.</text>
</comment>
<comment type="subcellular location">
    <subcellularLocation>
        <location evidence="1">Cell inner membrane</location>
        <topology evidence="1">Single-pass type II membrane protein</topology>
    </subcellularLocation>
    <text evidence="1">Forms helical filaments along the long axis of the cell.</text>
</comment>
<comment type="domain">
    <text evidence="1">The helix-turn-helix (HTH) motif in the cytoplasmic domain of the N-terminus is involved in the formation of spirals to maintain the rigid rod shape. As this protein is anchored in the cytoplasmic membrane, the HTH motif may contribute to protein-protein interactions to form the RodZ helix, which is localized beneath the cytoplasmic membrane. The C-terminal domain may be critical for determination of the rod shape by probably interacting with enzymes required for synthesis of the peptidoglycan layer, including PBPs in the periplasm.</text>
</comment>
<comment type="similarity">
    <text evidence="1">Belongs to the RodZ family.</text>
</comment>
<sequence length="337" mass="36173">MNTEATHDQNEALTTGARLRNAREQLGLSQQAVAERLCLKVSTVRDIEEDKAPADLASTFLRGYIRSYARLVHIPEEELLPGLEKQAPLRAAKVAPMQSFSLGKRRKKRDGWLMTFTWLVLFVVIGLSGAWWWQDHKAQQEEITTMADQSSAELSSNSEQGQSVPLNTSTTTDPATTSTPPASVDTTATNTQTPAVTAPAPAVDPQQNAVVSPSQANVDTAATPAPTAATTPDGAAPLPTDQAGVTTPVADPNALVMNFTADCWLEVTDATGKKLFSGMQRKDGNLNLTGQAPYKLKIGAPAAVQIQYQGKPVDLSRFIRTNQVARLTLNAEQSPAQ</sequence>
<protein>
    <recommendedName>
        <fullName evidence="1">Cytoskeleton protein RodZ</fullName>
    </recommendedName>
</protein>
<dbReference type="EMBL" id="AP009240">
    <property type="protein sequence ID" value="BAG78326.1"/>
    <property type="molecule type" value="Genomic_DNA"/>
</dbReference>
<dbReference type="RefSeq" id="WP_001090844.1">
    <property type="nucleotide sequence ID" value="NC_011415.1"/>
</dbReference>
<dbReference type="SMR" id="B6I588"/>
<dbReference type="GeneID" id="75172624"/>
<dbReference type="KEGG" id="ecy:ECSE_2802"/>
<dbReference type="HOGENOM" id="CLU_047530_3_1_6"/>
<dbReference type="Proteomes" id="UP000008199">
    <property type="component" value="Chromosome"/>
</dbReference>
<dbReference type="GO" id="GO:0005886">
    <property type="term" value="C:plasma membrane"/>
    <property type="evidence" value="ECO:0007669"/>
    <property type="project" value="UniProtKB-SubCell"/>
</dbReference>
<dbReference type="GO" id="GO:0003677">
    <property type="term" value="F:DNA binding"/>
    <property type="evidence" value="ECO:0007669"/>
    <property type="project" value="UniProtKB-KW"/>
</dbReference>
<dbReference type="GO" id="GO:0008360">
    <property type="term" value="P:regulation of cell shape"/>
    <property type="evidence" value="ECO:0007669"/>
    <property type="project" value="UniProtKB-UniRule"/>
</dbReference>
<dbReference type="CDD" id="cd00093">
    <property type="entry name" value="HTH_XRE"/>
    <property type="match status" value="1"/>
</dbReference>
<dbReference type="FunFam" id="1.10.260.40:FF:000014">
    <property type="entry name" value="Cytoskeleton protein RodZ"/>
    <property type="match status" value="1"/>
</dbReference>
<dbReference type="Gene3D" id="1.10.260.40">
    <property type="entry name" value="lambda repressor-like DNA-binding domains"/>
    <property type="match status" value="1"/>
</dbReference>
<dbReference type="HAMAP" id="MF_02017">
    <property type="entry name" value="RodZ"/>
    <property type="match status" value="1"/>
</dbReference>
<dbReference type="InterPro" id="IPR050400">
    <property type="entry name" value="Bact_Cytoskel_RodZ"/>
</dbReference>
<dbReference type="InterPro" id="IPR001387">
    <property type="entry name" value="Cro/C1-type_HTH"/>
</dbReference>
<dbReference type="InterPro" id="IPR010982">
    <property type="entry name" value="Lambda_DNA-bd_dom_sf"/>
</dbReference>
<dbReference type="InterPro" id="IPR023690">
    <property type="entry name" value="RodZ"/>
</dbReference>
<dbReference type="InterPro" id="IPR025194">
    <property type="entry name" value="RodZ-like_C"/>
</dbReference>
<dbReference type="NCBIfam" id="NF008109">
    <property type="entry name" value="PRK10856.1"/>
    <property type="match status" value="1"/>
</dbReference>
<dbReference type="PANTHER" id="PTHR34475">
    <property type="match status" value="1"/>
</dbReference>
<dbReference type="PANTHER" id="PTHR34475:SF1">
    <property type="entry name" value="CYTOSKELETON PROTEIN RODZ"/>
    <property type="match status" value="1"/>
</dbReference>
<dbReference type="Pfam" id="PF13413">
    <property type="entry name" value="HTH_25"/>
    <property type="match status" value="1"/>
</dbReference>
<dbReference type="Pfam" id="PF13464">
    <property type="entry name" value="RodZ_C"/>
    <property type="match status" value="1"/>
</dbReference>
<dbReference type="SMART" id="SM00530">
    <property type="entry name" value="HTH_XRE"/>
    <property type="match status" value="1"/>
</dbReference>
<dbReference type="SUPFAM" id="SSF47413">
    <property type="entry name" value="lambda repressor-like DNA-binding domains"/>
    <property type="match status" value="1"/>
</dbReference>
<dbReference type="PROSITE" id="PS50943">
    <property type="entry name" value="HTH_CROC1"/>
    <property type="match status" value="1"/>
</dbReference>
<keyword id="KW-0997">Cell inner membrane</keyword>
<keyword id="KW-1003">Cell membrane</keyword>
<keyword id="KW-0133">Cell shape</keyword>
<keyword id="KW-0238">DNA-binding</keyword>
<keyword id="KW-0472">Membrane</keyword>
<keyword id="KW-0735">Signal-anchor</keyword>
<keyword id="KW-0812">Transmembrane</keyword>
<keyword id="KW-1133">Transmembrane helix</keyword>
<name>RODZ_ECOSE</name>
<evidence type="ECO:0000255" key="1">
    <source>
        <dbReference type="HAMAP-Rule" id="MF_02017"/>
    </source>
</evidence>
<evidence type="ECO:0000256" key="2">
    <source>
        <dbReference type="SAM" id="MobiDB-lite"/>
    </source>
</evidence>
<accession>B6I588</accession>
<reference key="1">
    <citation type="journal article" date="2008" name="DNA Res.">
        <title>Complete genome sequence and comparative analysis of the wild-type commensal Escherichia coli strain SE11 isolated from a healthy adult.</title>
        <authorList>
            <person name="Oshima K."/>
            <person name="Toh H."/>
            <person name="Ogura Y."/>
            <person name="Sasamoto H."/>
            <person name="Morita H."/>
            <person name="Park S.-H."/>
            <person name="Ooka T."/>
            <person name="Iyoda S."/>
            <person name="Taylor T.D."/>
            <person name="Hayashi T."/>
            <person name="Itoh K."/>
            <person name="Hattori M."/>
        </authorList>
    </citation>
    <scope>NUCLEOTIDE SEQUENCE [LARGE SCALE GENOMIC DNA]</scope>
    <source>
        <strain>SE11</strain>
    </source>
</reference>